<keyword id="KW-1015">Disulfide bond</keyword>
<keyword id="KW-0325">Glycoprotein</keyword>
<keyword id="KW-0378">Hydrolase</keyword>
<keyword id="KW-0458">Lysosome</keyword>
<keyword id="KW-0472">Membrane</keyword>
<keyword id="KW-1185">Reference proteome</keyword>
<keyword id="KW-0732">Signal</keyword>
<keyword id="KW-0812">Transmembrane</keyword>
<keyword id="KW-1133">Transmembrane helix</keyword>
<accession>Q0P5F0</accession>
<gene>
    <name type="primary">ACP2</name>
</gene>
<proteinExistence type="evidence at transcript level"/>
<dbReference type="EC" id="3.1.3.2"/>
<dbReference type="EMBL" id="BC120138">
    <property type="protein sequence ID" value="AAI20139.1"/>
    <property type="molecule type" value="mRNA"/>
</dbReference>
<dbReference type="RefSeq" id="NP_001069526.1">
    <property type="nucleotide sequence ID" value="NM_001076058.3"/>
</dbReference>
<dbReference type="SMR" id="Q0P5F0"/>
<dbReference type="FunCoup" id="Q0P5F0">
    <property type="interactions" value="1781"/>
</dbReference>
<dbReference type="STRING" id="9913.ENSBTAP00000027968"/>
<dbReference type="GlyCosmos" id="Q0P5F0">
    <property type="glycosylation" value="8 sites, No reported glycans"/>
</dbReference>
<dbReference type="GlyGen" id="Q0P5F0">
    <property type="glycosylation" value="8 sites"/>
</dbReference>
<dbReference type="PaxDb" id="9913-ENSBTAP00000027968"/>
<dbReference type="GeneID" id="535407"/>
<dbReference type="KEGG" id="bta:535407"/>
<dbReference type="CTD" id="53"/>
<dbReference type="VEuPathDB" id="HostDB:ENSBTAG00000021002"/>
<dbReference type="eggNOG" id="KOG3720">
    <property type="taxonomic scope" value="Eukaryota"/>
</dbReference>
<dbReference type="HOGENOM" id="CLU_030431_0_0_1"/>
<dbReference type="InParanoid" id="Q0P5F0"/>
<dbReference type="OMA" id="DPHQESD"/>
<dbReference type="OrthoDB" id="258392at2759"/>
<dbReference type="TreeFam" id="TF312893"/>
<dbReference type="Proteomes" id="UP000009136">
    <property type="component" value="Chromosome 15"/>
</dbReference>
<dbReference type="Bgee" id="ENSBTAG00000021002">
    <property type="expression patterns" value="Expressed in monocyte and 104 other cell types or tissues"/>
</dbReference>
<dbReference type="GO" id="GO:0043202">
    <property type="term" value="C:lysosomal lumen"/>
    <property type="evidence" value="ECO:0007669"/>
    <property type="project" value="UniProtKB-SubCell"/>
</dbReference>
<dbReference type="GO" id="GO:0005765">
    <property type="term" value="C:lysosomal membrane"/>
    <property type="evidence" value="ECO:0007669"/>
    <property type="project" value="UniProtKB-SubCell"/>
</dbReference>
<dbReference type="GO" id="GO:0005764">
    <property type="term" value="C:lysosome"/>
    <property type="evidence" value="ECO:0000318"/>
    <property type="project" value="GO_Central"/>
</dbReference>
<dbReference type="GO" id="GO:0003993">
    <property type="term" value="F:acid phosphatase activity"/>
    <property type="evidence" value="ECO:0000318"/>
    <property type="project" value="GO_Central"/>
</dbReference>
<dbReference type="GO" id="GO:0007040">
    <property type="term" value="P:lysosome organization"/>
    <property type="evidence" value="ECO:0000318"/>
    <property type="project" value="GO_Central"/>
</dbReference>
<dbReference type="CDD" id="cd07061">
    <property type="entry name" value="HP_HAP_like"/>
    <property type="match status" value="1"/>
</dbReference>
<dbReference type="FunFam" id="3.40.50.1240:FF:000010">
    <property type="entry name" value="Prostatic acid phosphatase"/>
    <property type="match status" value="1"/>
</dbReference>
<dbReference type="Gene3D" id="3.40.50.1240">
    <property type="entry name" value="Phosphoglycerate mutase-like"/>
    <property type="match status" value="1"/>
</dbReference>
<dbReference type="InterPro" id="IPR033379">
    <property type="entry name" value="Acid_Pase_AS"/>
</dbReference>
<dbReference type="InterPro" id="IPR000560">
    <property type="entry name" value="His_Pase_clade-2"/>
</dbReference>
<dbReference type="InterPro" id="IPR029033">
    <property type="entry name" value="His_PPase_superfam"/>
</dbReference>
<dbReference type="InterPro" id="IPR050645">
    <property type="entry name" value="Histidine_acid_phosphatase"/>
</dbReference>
<dbReference type="PANTHER" id="PTHR11567">
    <property type="entry name" value="ACID PHOSPHATASE-RELATED"/>
    <property type="match status" value="1"/>
</dbReference>
<dbReference type="PANTHER" id="PTHR11567:SF180">
    <property type="entry name" value="LYSOSOMAL ACID PHOSPHATASE"/>
    <property type="match status" value="1"/>
</dbReference>
<dbReference type="Pfam" id="PF00328">
    <property type="entry name" value="His_Phos_2"/>
    <property type="match status" value="1"/>
</dbReference>
<dbReference type="SUPFAM" id="SSF53254">
    <property type="entry name" value="Phosphoglycerate mutase-like"/>
    <property type="match status" value="1"/>
</dbReference>
<dbReference type="PROSITE" id="PS00616">
    <property type="entry name" value="HIS_ACID_PHOSPHAT_1"/>
    <property type="match status" value="1"/>
</dbReference>
<dbReference type="PROSITE" id="PS00778">
    <property type="entry name" value="HIS_ACID_PHOSPHAT_2"/>
    <property type="match status" value="1"/>
</dbReference>
<comment type="catalytic activity">
    <reaction>
        <text>a phosphate monoester + H2O = an alcohol + phosphate</text>
        <dbReference type="Rhea" id="RHEA:15017"/>
        <dbReference type="ChEBI" id="CHEBI:15377"/>
        <dbReference type="ChEBI" id="CHEBI:30879"/>
        <dbReference type="ChEBI" id="CHEBI:43474"/>
        <dbReference type="ChEBI" id="CHEBI:67140"/>
        <dbReference type="EC" id="3.1.3.2"/>
    </reaction>
</comment>
<comment type="subcellular location">
    <subcellularLocation>
        <location evidence="2">Lysosome membrane</location>
        <topology evidence="3">Single-pass membrane protein</topology>
        <orientation evidence="2">Lumenal side</orientation>
    </subcellularLocation>
    <subcellularLocation>
        <location evidence="2">Lysosome lumen</location>
    </subcellularLocation>
    <text evidence="2">The soluble form arises by proteolytic processing of the membrane-bound form.</text>
</comment>
<comment type="PTM">
    <text evidence="1">The membrane-bound form is converted to the soluble form by sequential proteolytic processing. First, the C-terminal cytoplasmic tail is removed. Cleavage by a lysosomal protease releases the soluble form in the lysosome lumen (By similarity).</text>
</comment>
<comment type="similarity">
    <text evidence="4">Belongs to the histidine acid phosphatase family.</text>
</comment>
<protein>
    <recommendedName>
        <fullName>Lysosomal acid phosphatase</fullName>
        <shortName>LAP</shortName>
        <ecNumber>3.1.3.2</ecNumber>
    </recommendedName>
</protein>
<name>PPAL_BOVIN</name>
<feature type="signal peptide" evidence="1">
    <location>
        <begin position="1"/>
        <end position="30"/>
    </location>
</feature>
<feature type="chain" id="PRO_0000352520" description="Lysosomal acid phosphatase">
    <location>
        <begin position="31"/>
        <end position="423"/>
    </location>
</feature>
<feature type="topological domain" description="Lumenal" evidence="3">
    <location>
        <begin position="31"/>
        <end position="380"/>
    </location>
</feature>
<feature type="transmembrane region" description="Helical" evidence="3">
    <location>
        <begin position="381"/>
        <end position="401"/>
    </location>
</feature>
<feature type="topological domain" description="Cytoplasmic" evidence="3">
    <location>
        <begin position="402"/>
        <end position="423"/>
    </location>
</feature>
<feature type="active site" description="Nucleophile" evidence="1">
    <location>
        <position position="42"/>
    </location>
</feature>
<feature type="active site" description="Proton donor" evidence="1">
    <location>
        <position position="287"/>
    </location>
</feature>
<feature type="glycosylation site" description="N-linked (GlcNAc...) asparagine" evidence="3">
    <location>
        <position position="92"/>
    </location>
</feature>
<feature type="glycosylation site" description="N-linked (GlcNAc...) asparagine" evidence="3">
    <location>
        <position position="133"/>
    </location>
</feature>
<feature type="glycosylation site" description="N-linked (GlcNAc...) asparagine" evidence="3">
    <location>
        <position position="167"/>
    </location>
</feature>
<feature type="glycosylation site" description="N-linked (GlcNAc...) asparagine" evidence="3">
    <location>
        <position position="177"/>
    </location>
</feature>
<feature type="glycosylation site" description="N-linked (GlcNAc...) asparagine" evidence="3">
    <location>
        <position position="191"/>
    </location>
</feature>
<feature type="glycosylation site" description="N-linked (GlcNAc...) asparagine" evidence="3">
    <location>
        <position position="267"/>
    </location>
</feature>
<feature type="glycosylation site" description="N-linked (GlcNAc...) asparagine" evidence="3">
    <location>
        <position position="322"/>
    </location>
</feature>
<feature type="glycosylation site" description="N-linked (GlcNAc...) asparagine" evidence="3">
    <location>
        <position position="331"/>
    </location>
</feature>
<feature type="disulfide bond" evidence="1">
    <location>
        <begin position="159"/>
        <end position="370"/>
    </location>
</feature>
<feature type="disulfide bond" evidence="1">
    <location>
        <begin position="212"/>
        <end position="310"/>
    </location>
</feature>
<feature type="disulfide bond" evidence="1">
    <location>
        <begin position="345"/>
        <end position="349"/>
    </location>
</feature>
<organism>
    <name type="scientific">Bos taurus</name>
    <name type="common">Bovine</name>
    <dbReference type="NCBI Taxonomy" id="9913"/>
    <lineage>
        <taxon>Eukaryota</taxon>
        <taxon>Metazoa</taxon>
        <taxon>Chordata</taxon>
        <taxon>Craniata</taxon>
        <taxon>Vertebrata</taxon>
        <taxon>Euteleostomi</taxon>
        <taxon>Mammalia</taxon>
        <taxon>Eutheria</taxon>
        <taxon>Laurasiatheria</taxon>
        <taxon>Artiodactyla</taxon>
        <taxon>Ruminantia</taxon>
        <taxon>Pecora</taxon>
        <taxon>Bovidae</taxon>
        <taxon>Bovinae</taxon>
        <taxon>Bos</taxon>
    </lineage>
</organism>
<reference key="1">
    <citation type="submission" date="2006-08" db="EMBL/GenBank/DDBJ databases">
        <authorList>
            <consortium name="NIH - Mammalian Gene Collection (MGC) project"/>
        </authorList>
    </citation>
    <scope>NUCLEOTIDE SEQUENCE [LARGE SCALE MRNA]</scope>
    <source>
        <strain>Hereford</strain>
        <tissue>Fetal pons</tissue>
    </source>
</reference>
<sequence length="423" mass="48302">MAGRRFGWSRAALLQLILGVNLMVMPRTQARTLRFVTLLYRHGDRSPVKAYPKDPHQEDKWPQGFGQLTKEGMLQHWELGQALRQRYHGFLNTSYHRQEVYVRSTDFDRTLMSAEANLAGLFPPDGIQRFNPNISWQPIPVHTVPVAEDRLLKFPLGPCPRFEQLQNETRRMPEYQNESVQNAQFLDMVANETGLTDLSLETVWNVYDTLFCEQTHGLPLPPWASPQTMQRLSRLKDFSFRFLFGIYKQAEKARLQGGVLLAQIRKNLTLMATTSQLPKLLVYSAHDTTLVALHMALGVYNGEQAPYASCHMFELYQEDSGNFSVEMYFRNESHRAPWPLTLPGCSHRCPLQDFLRLTEPVVPKDWLQECQLAGGPADTEVIVALAVCGSILFLLIVLLLTVLFRVQAQPPGYRHVPDGEDHA</sequence>
<evidence type="ECO:0000250" key="1"/>
<evidence type="ECO:0000250" key="2">
    <source>
        <dbReference type="UniProtKB" id="P11117"/>
    </source>
</evidence>
<evidence type="ECO:0000255" key="3"/>
<evidence type="ECO:0000305" key="4"/>